<evidence type="ECO:0000250" key="1"/>
<evidence type="ECO:0000305" key="2"/>
<evidence type="ECO:0000305" key="3">
    <source>
    </source>
</evidence>
<proteinExistence type="evidence at transcript level"/>
<dbReference type="EMBL" id="X72023">
    <property type="protein sequence ID" value="CAA50906.1"/>
    <property type="molecule type" value="Genomic_DNA"/>
</dbReference>
<dbReference type="EMBL" id="M73038">
    <property type="protein sequence ID" value="AAD38210.1"/>
    <property type="molecule type" value="Genomic_DNA"/>
</dbReference>
<dbReference type="PIR" id="I40864">
    <property type="entry name" value="I40864"/>
</dbReference>
<dbReference type="STRING" id="406984.CPK_ORF00098"/>
<dbReference type="GO" id="GO:0009279">
    <property type="term" value="C:cell outer membrane"/>
    <property type="evidence" value="ECO:0007669"/>
    <property type="project" value="UniProtKB-SubCell"/>
</dbReference>
<dbReference type="GO" id="GO:0046930">
    <property type="term" value="C:pore complex"/>
    <property type="evidence" value="ECO:0007669"/>
    <property type="project" value="UniProtKB-KW"/>
</dbReference>
<dbReference type="GO" id="GO:0015288">
    <property type="term" value="F:porin activity"/>
    <property type="evidence" value="ECO:0007669"/>
    <property type="project" value="UniProtKB-KW"/>
</dbReference>
<dbReference type="GO" id="GO:0005198">
    <property type="term" value="F:structural molecule activity"/>
    <property type="evidence" value="ECO:0007669"/>
    <property type="project" value="InterPro"/>
</dbReference>
<dbReference type="GO" id="GO:0006811">
    <property type="term" value="P:monoatomic ion transport"/>
    <property type="evidence" value="ECO:0007669"/>
    <property type="project" value="UniProtKB-KW"/>
</dbReference>
<dbReference type="GO" id="GO:0008360">
    <property type="term" value="P:regulation of cell shape"/>
    <property type="evidence" value="ECO:0007669"/>
    <property type="project" value="UniProtKB-KW"/>
</dbReference>
<dbReference type="InterPro" id="IPR000604">
    <property type="entry name" value="Major_OMP_Chlamydia"/>
</dbReference>
<dbReference type="Pfam" id="PF01308">
    <property type="entry name" value="Chlam_OMP"/>
    <property type="match status" value="1"/>
</dbReference>
<dbReference type="PRINTS" id="PR01334">
    <property type="entry name" value="CHLAMIDIAOMP"/>
</dbReference>
<gene>
    <name type="primary">ompA</name>
    <name type="synonym">omp1</name>
</gene>
<accession>Q9XBF4</accession>
<accession>Q08085</accession>
<keyword id="KW-0998">Cell outer membrane</keyword>
<keyword id="KW-0133">Cell shape</keyword>
<keyword id="KW-1015">Disulfide bond</keyword>
<keyword id="KW-0406">Ion transport</keyword>
<keyword id="KW-0472">Membrane</keyword>
<keyword id="KW-0626">Porin</keyword>
<keyword id="KW-0812">Transmembrane</keyword>
<keyword id="KW-1134">Transmembrane beta strand</keyword>
<keyword id="KW-0813">Transport</keyword>
<protein>
    <recommendedName>
        <fullName>Major outer membrane porin</fullName>
        <shortName>MOMP</shortName>
    </recommendedName>
</protein>
<feature type="chain" id="PRO_0000207120" description="Major outer membrane porin">
    <location>
        <begin position="1"/>
        <end position="389"/>
    </location>
</feature>
<feature type="sequence conflict" description="In Ref. 2; AAD38210." evidence="2" ref="2">
    <original>A</original>
    <variation>P</variation>
    <location>
        <position position="328"/>
    </location>
</feature>
<organism>
    <name type="scientific">Chlamydia pneumoniae</name>
    <name type="common">Chlamydophila pneumoniae</name>
    <dbReference type="NCBI Taxonomy" id="83558"/>
    <lineage>
        <taxon>Bacteria</taxon>
        <taxon>Pseudomonadati</taxon>
        <taxon>Chlamydiota</taxon>
        <taxon>Chlamydiia</taxon>
        <taxon>Chlamydiales</taxon>
        <taxon>Chlamydiaceae</taxon>
        <taxon>Chlamydia/Chlamydophila group</taxon>
        <taxon>Chlamydia</taxon>
    </lineage>
</organism>
<name>MOMPK_CHLPN</name>
<sequence length="389" mass="41579">MKKLLKSALLSAAFAGSVGSLQALPVGNPSDPSLLIDGTIWEGAAGDPCDPCATWCDAISLRAGFYGDYVFDRILKVDAPKTFSMGAKPTGSATANYTTAVDRPNPAYNKHLHDAEWFTNAGFIALNIWDRFDVFCTLGASNGYIKGNSTAFNLVGLFGVKGTSVAANELPNVSLSNGVVELYTDTSFSWSVGARGALWECGCATLGAEFQYAQSKPKVEELNVICNVAQFSVNKPKGYKGVAFPLPTDAGVATATGTKSATINYHEWQVGASLSYRLNSLVPYIGVQWSRATFDADNIRIAQPKLPTAVLNLTAWNPSLLGNTTTLATSDSFSDFMQIVSCQINKFKSRKACGVTVGATLVDADKWSLTAEARLINERAAHVSGQFRF</sequence>
<comment type="function">
    <text evidence="1">In elementary bodies (EBs, the infectious stage, which is able to survive outside the host cell) provides the structural integrity of the outer envelope through disulfide cross-links with the small cysteine-rich protein and the large cysteine-rich periplasmic protein. It has been described in publications as the Sarkosyl-insoluble COMC (Chlamydia outer membrane complex), and serves as the functional equivalent of peptidoglycan (By similarity).</text>
</comment>
<comment type="function">
    <text evidence="1">Permits diffusion of specific solutes through the outer membrane.</text>
</comment>
<comment type="subunit">
    <text>Part of a disulfide cross-linked outer membrane complex (COMC) composed of the major outer membrane porin (MOMP), the small cysteine-rich protein (OmcA) and the large cysteine-rich periplasmic protein (OmcB).</text>
</comment>
<comment type="subcellular location">
    <subcellularLocation>
        <location evidence="1">Cell outer membrane</location>
        <topology evidence="1">Multi-pass membrane protein</topology>
    </subcellularLocation>
</comment>
<comment type="developmental stage">
    <text>It is present but some of the disulfide bonds are reduced in reticulate bodies (RBs).</text>
</comment>
<comment type="similarity">
    <text evidence="2">Belongs to the chlamydial porin (CP) (TC 1.B.2) family.</text>
</comment>
<comment type="caution">
    <text evidence="3">Was originally thought to originate from Chlamydia psittaci.</text>
</comment>
<reference key="1">
    <citation type="journal article" date="1994" name="Gene">
        <title>Remarkable sequence relatedness in the DNA encoding the major outer membrane protein of Chlamydia psittaci (koala type I) and Chlamydia pneumoniae.</title>
        <authorList>
            <person name="Girjes A.A."/>
            <person name="Carrick F.N."/>
            <person name="Lavin M.F."/>
        </authorList>
    </citation>
    <scope>NUCLEOTIDE SEQUENCE [GENOMIC DNA]</scope>
    <source>
        <strain>Koala type I</strain>
    </source>
</reference>
<reference key="2">
    <citation type="journal article" date="1993" name="J. Bacteriol.">
        <title>Structures of and allelic diversity and relationships among the major outer membrane protein (ompA) genes of the four chlamydial species.</title>
        <authorList>
            <person name="Kaltenboeck B."/>
            <person name="Kousoulas K.G."/>
            <person name="Storz J."/>
        </authorList>
    </citation>
    <scope>NUCLEOTIDE SEQUENCE [GENOMIC DNA] OF 45-377</scope>
    <source>
        <strain>Koala type I</strain>
    </source>
</reference>